<protein>
    <recommendedName>
        <fullName>Four and a half LIM domains protein 3</fullName>
        <shortName>FHL-3</shortName>
    </recommendedName>
    <alternativeName>
        <fullName>Skeletal muscle LIM-protein 2</fullName>
        <shortName>SLIM-2</shortName>
    </alternativeName>
</protein>
<reference key="1">
    <citation type="journal article" date="1999" name="Biochem. Biophys. Res. Commun.">
        <title>The LIM proteins FHL1 and FHL3 are expressed differently in skeletal muscle.</title>
        <authorList>
            <person name="Morgan M.J."/>
            <person name="Madgwick A.J.A."/>
        </authorList>
    </citation>
    <scope>NUCLEOTIDE SEQUENCE [MRNA]</scope>
    <scope>TISSUE SPECIFICITY</scope>
</reference>
<reference key="2">
    <citation type="journal article" date="2000" name="Mech. Dev.">
        <title>Expression patterns of FHL/SLIM family members suggest important functional roles in skeletal muscle and cardiovascular system.</title>
        <authorList>
            <person name="Chu P.-H."/>
            <person name="Ruiz-Lozano P."/>
            <person name="Zhou Q."/>
            <person name="Cai C."/>
            <person name="Chen J."/>
        </authorList>
    </citation>
    <scope>NUCLEOTIDE SEQUENCE [MRNA]</scope>
    <scope>TISSUE SPECIFICITY</scope>
    <scope>DEVELOPMENTAL STAGE</scope>
</reference>
<reference key="3">
    <citation type="journal article" date="2009" name="PLoS Biol.">
        <title>Lineage-specific biology revealed by a finished genome assembly of the mouse.</title>
        <authorList>
            <person name="Church D.M."/>
            <person name="Goodstadt L."/>
            <person name="Hillier L.W."/>
            <person name="Zody M.C."/>
            <person name="Goldstein S."/>
            <person name="She X."/>
            <person name="Bult C.J."/>
            <person name="Agarwala R."/>
            <person name="Cherry J.L."/>
            <person name="DiCuccio M."/>
            <person name="Hlavina W."/>
            <person name="Kapustin Y."/>
            <person name="Meric P."/>
            <person name="Maglott D."/>
            <person name="Birtle Z."/>
            <person name="Marques A.C."/>
            <person name="Graves T."/>
            <person name="Zhou S."/>
            <person name="Teague B."/>
            <person name="Potamousis K."/>
            <person name="Churas C."/>
            <person name="Place M."/>
            <person name="Herschleb J."/>
            <person name="Runnheim R."/>
            <person name="Forrest D."/>
            <person name="Amos-Landgraf J."/>
            <person name="Schwartz D.C."/>
            <person name="Cheng Z."/>
            <person name="Lindblad-Toh K."/>
            <person name="Eichler E.E."/>
            <person name="Ponting C.P."/>
        </authorList>
    </citation>
    <scope>NUCLEOTIDE SEQUENCE [LARGE SCALE GENOMIC DNA]</scope>
    <source>
        <strain>C57BL/6J</strain>
    </source>
</reference>
<reference key="4">
    <citation type="journal article" date="2004" name="Genome Res.">
        <title>The status, quality, and expansion of the NIH full-length cDNA project: the Mammalian Gene Collection (MGC).</title>
        <authorList>
            <consortium name="The MGC Project Team"/>
        </authorList>
    </citation>
    <scope>NUCLEOTIDE SEQUENCE [LARGE SCALE MRNA]</scope>
    <source>
        <tissue>Brain</tissue>
    </source>
</reference>
<reference key="5">
    <citation type="submission" date="1999-05" db="EMBL/GenBank/DDBJ databases">
        <title>The cloning, sequencing and characterization of a mouse FHL3, which contains four and a half LIM domains.</title>
        <authorList>
            <person name="Li H.Y."/>
            <person name="Lee S.M.Y."/>
            <person name="Tsui S.K.W."/>
            <person name="Chan K.K."/>
            <person name="Kotaka M."/>
            <person name="Chim S.S.C."/>
            <person name="Lee C.Y."/>
            <person name="Fung K.P."/>
            <person name="Waye M.M.Y."/>
        </authorList>
    </citation>
    <scope>NUCLEOTIDE SEQUENCE [MRNA] OF 11-228</scope>
</reference>
<reference key="6">
    <citation type="journal article" date="2007" name="EMBO J.">
        <title>Sox15 and Fhl3 transcriptionally coactivate Foxk1 and regulate myogenic progenitor cells.</title>
        <authorList>
            <person name="Meeson A.P."/>
            <person name="Shi X."/>
            <person name="Alexander M.S."/>
            <person name="Williams R.S."/>
            <person name="Allen R.E."/>
            <person name="Jiang N."/>
            <person name="Adham I.M."/>
            <person name="Goetsch S.C."/>
            <person name="Hammer R.E."/>
            <person name="Garry D.J."/>
        </authorList>
    </citation>
    <scope>FUNCTION</scope>
    <scope>INTERACTION WITH SOX15</scope>
    <scope>SUBCELLULAR LOCATION</scope>
    <scope>TISSUE SPECIFICITY</scope>
</reference>
<reference key="7">
    <citation type="journal article" date="2010" name="Cell">
        <title>A tissue-specific atlas of mouse protein phosphorylation and expression.</title>
        <authorList>
            <person name="Huttlin E.L."/>
            <person name="Jedrychowski M.P."/>
            <person name="Elias J.E."/>
            <person name="Goswami T."/>
            <person name="Rad R."/>
            <person name="Beausoleil S.A."/>
            <person name="Villen J."/>
            <person name="Haas W."/>
            <person name="Sowa M.E."/>
            <person name="Gygi S.P."/>
        </authorList>
    </citation>
    <scope>IDENTIFICATION BY MASS SPECTROMETRY [LARGE SCALE ANALYSIS]</scope>
    <source>
        <tissue>Heart</tissue>
        <tissue>Kidney</tissue>
        <tissue>Lung</tissue>
        <tissue>Spleen</tissue>
        <tissue>Testis</tissue>
    </source>
</reference>
<reference key="8">
    <citation type="journal article" date="2013" name="Mol. Cell">
        <title>SIRT5-mediated lysine desuccinylation impacts diverse metabolic pathways.</title>
        <authorList>
            <person name="Park J."/>
            <person name="Chen Y."/>
            <person name="Tishkoff D.X."/>
            <person name="Peng C."/>
            <person name="Tan M."/>
            <person name="Dai L."/>
            <person name="Xie Z."/>
            <person name="Zhang Y."/>
            <person name="Zwaans B.M."/>
            <person name="Skinner M.E."/>
            <person name="Lombard D.B."/>
            <person name="Zhao Y."/>
        </authorList>
    </citation>
    <scope>ACETYLATION [LARGE SCALE ANALYSIS] AT LYS-157 AND LYS-244</scope>
    <scope>IDENTIFICATION BY MASS SPECTROMETRY [LARGE SCALE ANALYSIS]</scope>
    <source>
        <tissue>Embryonic fibroblast</tissue>
    </source>
</reference>
<name>FHL3_MOUSE</name>
<gene>
    <name type="primary">Fhl3</name>
</gene>
<organism>
    <name type="scientific">Mus musculus</name>
    <name type="common">Mouse</name>
    <dbReference type="NCBI Taxonomy" id="10090"/>
    <lineage>
        <taxon>Eukaryota</taxon>
        <taxon>Metazoa</taxon>
        <taxon>Chordata</taxon>
        <taxon>Craniata</taxon>
        <taxon>Vertebrata</taxon>
        <taxon>Euteleostomi</taxon>
        <taxon>Mammalia</taxon>
        <taxon>Eutheria</taxon>
        <taxon>Euarchontoglires</taxon>
        <taxon>Glires</taxon>
        <taxon>Rodentia</taxon>
        <taxon>Myomorpha</taxon>
        <taxon>Muroidea</taxon>
        <taxon>Muridae</taxon>
        <taxon>Murinae</taxon>
        <taxon>Mus</taxon>
        <taxon>Mus</taxon>
    </lineage>
</organism>
<accession>Q9R059</accession>
<accession>A6H6N4</accession>
<accession>Q9JLP5</accession>
<accession>Q9WUH3</accession>
<feature type="initiator methionine" description="Removed" evidence="1">
    <location>
        <position position="1"/>
    </location>
</feature>
<feature type="chain" id="PRO_0000075741" description="Four and a half LIM domains protein 3">
    <location>
        <begin position="2"/>
        <end position="289"/>
    </location>
</feature>
<feature type="domain" description="LIM zinc-binding 1" evidence="3">
    <location>
        <begin position="40"/>
        <end position="92"/>
    </location>
</feature>
<feature type="domain" description="LIM zinc-binding 2" evidence="3">
    <location>
        <begin position="101"/>
        <end position="153"/>
    </location>
</feature>
<feature type="domain" description="LIM zinc-binding 3" evidence="3">
    <location>
        <begin position="162"/>
        <end position="212"/>
    </location>
</feature>
<feature type="domain" description="LIM zinc-binding 4" evidence="3">
    <location>
        <begin position="221"/>
        <end position="275"/>
    </location>
</feature>
<feature type="zinc finger region" description="C4-type" evidence="2">
    <location>
        <begin position="7"/>
        <end position="31"/>
    </location>
</feature>
<feature type="modified residue" description="N-acetylserine" evidence="1">
    <location>
        <position position="2"/>
    </location>
</feature>
<feature type="modified residue" description="N6-acetyllysine" evidence="8">
    <location>
        <position position="157"/>
    </location>
</feature>
<feature type="modified residue" description="N6-acetyllysine" evidence="8">
    <location>
        <position position="244"/>
    </location>
</feature>
<feature type="sequence conflict" description="In Ref. 1; AAD32623." evidence="7" ref="1">
    <original>D</original>
    <variation>G</variation>
    <location>
        <position position="77"/>
    </location>
</feature>
<feature type="sequence conflict" description="In Ref. 1; AAD32623." evidence="7" ref="1">
    <original>E</original>
    <variation>D</variation>
    <location>
        <position position="91"/>
    </location>
</feature>
<feature type="sequence conflict" description="In Ref. 1; AAD32623." evidence="7" ref="1">
    <original>T</original>
    <variation>S</variation>
    <location>
        <position position="95"/>
    </location>
</feature>
<feature type="sequence conflict" description="In Ref. 2; AAD53231." evidence="7" ref="2">
    <original>G</original>
    <variation>A</variation>
    <location>
        <position position="137"/>
    </location>
</feature>
<feature type="sequence conflict" description="In Ref. 5; AAF73159." evidence="7" ref="5">
    <original>KFA</original>
    <variation>NLT</variation>
    <location>
        <begin position="157"/>
        <end position="159"/>
    </location>
</feature>
<feature type="sequence conflict" description="In Ref. 1; AAD32623." evidence="7" ref="1">
    <original>K</original>
    <variation>Q</variation>
    <location>
        <position position="192"/>
    </location>
</feature>
<feature type="sequence conflict" description="In Ref. 2; AAD53231." evidence="7" ref="2">
    <original>Q</original>
    <variation>H</variation>
    <location>
        <position position="199"/>
    </location>
</feature>
<feature type="sequence conflict" description="In Ref. 1; AAD32623." evidence="7" ref="1">
    <original>D</original>
    <variation>E</variation>
    <location>
        <position position="205"/>
    </location>
</feature>
<feature type="sequence conflict" description="In Ref. 2; AAD53231." evidence="7" ref="2">
    <original>K</original>
    <variation>N</variation>
    <location>
        <position position="225"/>
    </location>
</feature>
<feature type="sequence conflict" description="In Ref. 1; AAD32623." evidence="7" ref="1">
    <original>TGGSGGGEGA</original>
    <variation>V</variation>
    <location>
        <begin position="229"/>
        <end position="238"/>
    </location>
</feature>
<feature type="sequence conflict" description="In Ref. 2; AAD53231." evidence="7" ref="2">
    <original>G</original>
    <variation>A</variation>
    <location>
        <position position="235"/>
    </location>
</feature>
<feature type="sequence conflict" description="In Ref. 1; AAD32623." evidence="7" ref="1">
    <original>S</original>
    <variation>N</variation>
    <location>
        <position position="256"/>
    </location>
</feature>
<comment type="function">
    <text evidence="6">Recruited by SOX15 to FOXK1 promoters where it acts as a transcriptional coactivator of FOXK1.</text>
</comment>
<comment type="subunit">
    <text evidence="6">Interacts with SOX15; the interaction recruits FHL3 to FOXK1 promoters where it acts as a transcriptional coactivator of FOXK1.</text>
</comment>
<comment type="interaction">
    <interactant intactId="EBI-7332617">
        <id>Q9R059</id>
    </interactant>
    <interactant intactId="EBI-7332587">
        <id>P43267</id>
        <label>Sox15</label>
    </interactant>
    <organismsDiffer>false</organismsDiffer>
    <experiments>7</experiments>
</comment>
<comment type="subcellular location">
    <subcellularLocation>
        <location evidence="6">Nucleus</location>
    </subcellularLocation>
    <subcellularLocation>
        <location evidence="6">Cytoplasm</location>
    </subcellularLocation>
</comment>
<comment type="tissue specificity">
    <text evidence="4 5 6">Expressed in myogenic progenitor cells (at protein level) (PubMed:17363903). Expressed in skeletal striated muscle and the heart (PubMed:10906474, PubMed:17363903). Expressed to a lesser extent, in lung, and kidney (PubMed:10906474). Expressed in skin and skeletal muscles such as the masseter, tongue, tibialis anterior and plantar muscles (PubMed:10049693).</text>
</comment>
<comment type="developmental stage">
    <text evidence="5">Expressed ubiquitously at low levels during embryonic development.</text>
</comment>
<evidence type="ECO:0000250" key="1">
    <source>
        <dbReference type="UniProtKB" id="Q13643"/>
    </source>
</evidence>
<evidence type="ECO:0000255" key="2"/>
<evidence type="ECO:0000255" key="3">
    <source>
        <dbReference type="PROSITE-ProRule" id="PRU00125"/>
    </source>
</evidence>
<evidence type="ECO:0000269" key="4">
    <source>
    </source>
</evidence>
<evidence type="ECO:0000269" key="5">
    <source>
    </source>
</evidence>
<evidence type="ECO:0000269" key="6">
    <source>
    </source>
</evidence>
<evidence type="ECO:0000305" key="7"/>
<evidence type="ECO:0007744" key="8">
    <source>
    </source>
</evidence>
<sequence>MSEAFDCAKCNESLYGRKYIQTDSGPYCVPCYDNTFANTCAECQQLIGHDSRELFYEDRHFHEGCFRCCRCQRSLADEPFTCQDSELLCNECYCTAFSSQCSACGETVMPGSRKLEYGGQTWHEHCFLCSGCEQPLGSRSFVPDKGAHYCVPCYENKFAPRCARCSKTLTQGGVTYRDQPWHRECLVCTGCKTPLAGQQFTSRDDDPYCVACFGELFAPKCSSCKRPITGGSGGGEGAGLGGGKYVSFEDRHWHHSCFSCARCSTSLVGQGFVPDGDQVLCQGCSQAGP</sequence>
<keyword id="KW-0007">Acetylation</keyword>
<keyword id="KW-0010">Activator</keyword>
<keyword id="KW-0963">Cytoplasm</keyword>
<keyword id="KW-0440">LIM domain</keyword>
<keyword id="KW-0479">Metal-binding</keyword>
<keyword id="KW-0539">Nucleus</keyword>
<keyword id="KW-1185">Reference proteome</keyword>
<keyword id="KW-0677">Repeat</keyword>
<keyword id="KW-0804">Transcription</keyword>
<keyword id="KW-0805">Transcription regulation</keyword>
<keyword id="KW-0862">Zinc</keyword>
<keyword id="KW-0863">Zinc-finger</keyword>
<dbReference type="EMBL" id="AF134772">
    <property type="protein sequence ID" value="AAD32623.1"/>
    <property type="molecule type" value="mRNA"/>
</dbReference>
<dbReference type="EMBL" id="AF114382">
    <property type="protein sequence ID" value="AAD53231.1"/>
    <property type="molecule type" value="mRNA"/>
</dbReference>
<dbReference type="EMBL" id="AL606907">
    <property type="status" value="NOT_ANNOTATED_CDS"/>
    <property type="molecule type" value="Genomic_DNA"/>
</dbReference>
<dbReference type="EMBL" id="BC144903">
    <property type="protein sequence ID" value="AAI44904.1"/>
    <property type="molecule type" value="mRNA"/>
</dbReference>
<dbReference type="EMBL" id="BC145939">
    <property type="protein sequence ID" value="AAI45940.1"/>
    <property type="molecule type" value="mRNA"/>
</dbReference>
<dbReference type="EMBL" id="AF149826">
    <property type="protein sequence ID" value="AAF73159.1"/>
    <property type="molecule type" value="mRNA"/>
</dbReference>
<dbReference type="CCDS" id="CCDS38874.1"/>
<dbReference type="RefSeq" id="NP_001405908.1">
    <property type="nucleotide sequence ID" value="NM_001418979.1"/>
</dbReference>
<dbReference type="RefSeq" id="NP_001405909.1">
    <property type="nucleotide sequence ID" value="NM_001418980.1"/>
</dbReference>
<dbReference type="RefSeq" id="NP_001405910.1">
    <property type="nucleotide sequence ID" value="NM_001418981.1"/>
</dbReference>
<dbReference type="RefSeq" id="NP_001405911.1">
    <property type="nucleotide sequence ID" value="NM_001418982.1"/>
</dbReference>
<dbReference type="RefSeq" id="NP_034343.2">
    <property type="nucleotide sequence ID" value="NM_010213.4"/>
</dbReference>
<dbReference type="RefSeq" id="XP_006502831.1">
    <property type="nucleotide sequence ID" value="XM_006502768.3"/>
</dbReference>
<dbReference type="SMR" id="Q9R059"/>
<dbReference type="BioGRID" id="199670">
    <property type="interactions" value="6"/>
</dbReference>
<dbReference type="FunCoup" id="Q9R059">
    <property type="interactions" value="79"/>
</dbReference>
<dbReference type="IntAct" id="Q9R059">
    <property type="interactions" value="1"/>
</dbReference>
<dbReference type="MINT" id="Q9R059"/>
<dbReference type="STRING" id="10090.ENSMUSP00000040150"/>
<dbReference type="iPTMnet" id="Q9R059"/>
<dbReference type="PhosphoSitePlus" id="Q9R059"/>
<dbReference type="SwissPalm" id="Q9R059"/>
<dbReference type="jPOST" id="Q9R059"/>
<dbReference type="PaxDb" id="10090-ENSMUSP00000040150"/>
<dbReference type="PeptideAtlas" id="Q9R059"/>
<dbReference type="ProteomicsDB" id="270989"/>
<dbReference type="Pumba" id="Q9R059"/>
<dbReference type="Antibodypedia" id="31823">
    <property type="antibodies" value="171 antibodies from 31 providers"/>
</dbReference>
<dbReference type="DNASU" id="14201"/>
<dbReference type="Ensembl" id="ENSMUST00000038684.6">
    <property type="protein sequence ID" value="ENSMUSP00000040150.6"/>
    <property type="gene ID" value="ENSMUSG00000032643.13"/>
</dbReference>
<dbReference type="GeneID" id="14201"/>
<dbReference type="KEGG" id="mmu:14201"/>
<dbReference type="UCSC" id="uc008uqv.2">
    <property type="organism name" value="mouse"/>
</dbReference>
<dbReference type="AGR" id="MGI:1341092"/>
<dbReference type="CTD" id="2275"/>
<dbReference type="MGI" id="MGI:1341092">
    <property type="gene designation" value="Fhl3"/>
</dbReference>
<dbReference type="VEuPathDB" id="HostDB:ENSMUSG00000032643"/>
<dbReference type="eggNOG" id="KOG1704">
    <property type="taxonomic scope" value="Eukaryota"/>
</dbReference>
<dbReference type="GeneTree" id="ENSGT00950000183028"/>
<dbReference type="InParanoid" id="Q9R059"/>
<dbReference type="OrthoDB" id="274660at2759"/>
<dbReference type="PhylomeDB" id="Q9R059"/>
<dbReference type="TreeFam" id="TF314113"/>
<dbReference type="BioGRID-ORCS" id="14201">
    <property type="hits" value="3 hits in 60 CRISPR screens"/>
</dbReference>
<dbReference type="ChiTaRS" id="Fhl3">
    <property type="organism name" value="mouse"/>
</dbReference>
<dbReference type="PRO" id="PR:Q9R059"/>
<dbReference type="Proteomes" id="UP000000589">
    <property type="component" value="Chromosome 4"/>
</dbReference>
<dbReference type="RNAct" id="Q9R059">
    <property type="molecule type" value="protein"/>
</dbReference>
<dbReference type="Bgee" id="ENSMUSG00000032643">
    <property type="expression patterns" value="Expressed in hindlimb stylopod muscle and 64 other cell types or tissues"/>
</dbReference>
<dbReference type="ExpressionAtlas" id="Q9R059">
    <property type="expression patterns" value="baseline and differential"/>
</dbReference>
<dbReference type="GO" id="GO:0005634">
    <property type="term" value="C:nucleus"/>
    <property type="evidence" value="ECO:0000314"/>
    <property type="project" value="MGI"/>
</dbReference>
<dbReference type="GO" id="GO:0001725">
    <property type="term" value="C:stress fiber"/>
    <property type="evidence" value="ECO:0000314"/>
    <property type="project" value="MGI"/>
</dbReference>
<dbReference type="GO" id="GO:0030018">
    <property type="term" value="C:Z disc"/>
    <property type="evidence" value="ECO:0000314"/>
    <property type="project" value="MGI"/>
</dbReference>
<dbReference type="GO" id="GO:0003779">
    <property type="term" value="F:actin binding"/>
    <property type="evidence" value="ECO:0000314"/>
    <property type="project" value="MGI"/>
</dbReference>
<dbReference type="GO" id="GO:0008270">
    <property type="term" value="F:zinc ion binding"/>
    <property type="evidence" value="ECO:0007669"/>
    <property type="project" value="UniProtKB-KW"/>
</dbReference>
<dbReference type="GO" id="GO:0030036">
    <property type="term" value="P:actin cytoskeleton organization"/>
    <property type="evidence" value="ECO:0000314"/>
    <property type="project" value="MGI"/>
</dbReference>
<dbReference type="CDD" id="cd09423">
    <property type="entry name" value="LIM1_FHL3"/>
    <property type="match status" value="1"/>
</dbReference>
<dbReference type="CDD" id="cd09427">
    <property type="entry name" value="LIM2_FHL3"/>
    <property type="match status" value="1"/>
</dbReference>
<dbReference type="CDD" id="cd09346">
    <property type="entry name" value="LIM3_FHL"/>
    <property type="match status" value="1"/>
</dbReference>
<dbReference type="FunFam" id="2.10.110.10:FF:000013">
    <property type="entry name" value="Four and a half LIM domains 1"/>
    <property type="match status" value="1"/>
</dbReference>
<dbReference type="FunFam" id="2.10.110.10:FF:000030">
    <property type="entry name" value="Four and a half LIM domains protein 2"/>
    <property type="match status" value="1"/>
</dbReference>
<dbReference type="FunFam" id="2.10.110.10:FF:000064">
    <property type="entry name" value="Four and a half LIM domains protein 3"/>
    <property type="match status" value="1"/>
</dbReference>
<dbReference type="FunFam" id="2.10.110.10:FF:000095">
    <property type="entry name" value="four and a half LIM domains protein 3"/>
    <property type="match status" value="1"/>
</dbReference>
<dbReference type="Gene3D" id="2.10.110.10">
    <property type="entry name" value="Cysteine Rich Protein"/>
    <property type="match status" value="5"/>
</dbReference>
<dbReference type="InterPro" id="IPR056807">
    <property type="entry name" value="LIM_FHL1/2/3/5_N"/>
</dbReference>
<dbReference type="InterPro" id="IPR001781">
    <property type="entry name" value="Znf_LIM"/>
</dbReference>
<dbReference type="PANTHER" id="PTHR24205">
    <property type="entry name" value="FOUR AND A HALF LIM DOMAINS PROTEIN"/>
    <property type="match status" value="1"/>
</dbReference>
<dbReference type="PANTHER" id="PTHR24205:SF5">
    <property type="entry name" value="FOUR AND A HALF LIM DOMAINS PROTEIN 3"/>
    <property type="match status" value="1"/>
</dbReference>
<dbReference type="Pfam" id="PF00412">
    <property type="entry name" value="LIM"/>
    <property type="match status" value="4"/>
</dbReference>
<dbReference type="Pfam" id="PF25076">
    <property type="entry name" value="LIM_FHL2-3_N"/>
    <property type="match status" value="1"/>
</dbReference>
<dbReference type="SMART" id="SM00132">
    <property type="entry name" value="LIM"/>
    <property type="match status" value="4"/>
</dbReference>
<dbReference type="SUPFAM" id="SSF57716">
    <property type="entry name" value="Glucocorticoid receptor-like (DNA-binding domain)"/>
    <property type="match status" value="5"/>
</dbReference>
<dbReference type="PROSITE" id="PS00478">
    <property type="entry name" value="LIM_DOMAIN_1"/>
    <property type="match status" value="3"/>
</dbReference>
<dbReference type="PROSITE" id="PS50023">
    <property type="entry name" value="LIM_DOMAIN_2"/>
    <property type="match status" value="4"/>
</dbReference>
<proteinExistence type="evidence at protein level"/>